<comment type="function">
    <text evidence="3 5">Peptide transporter. Mediates the transport of di- and tripeptides. High affinity transporter with low selectivity. No transport of amino acids.</text>
</comment>
<comment type="subcellular location">
    <subcellularLocation>
        <location evidence="3">Cell membrane</location>
        <topology evidence="3">Multi-pass membrane protein</topology>
    </subcellularLocation>
</comment>
<comment type="tissue specificity">
    <text evidence="3 4">Expressed in cotyledons, hypocotyls, leaves, roots, flowers, pistils and vascular tissue of sepals, anthers, carpels and funiculi. Not detected in seeds.</text>
</comment>
<comment type="disruption phenotype">
    <text evidence="5">Reduced growth and lower N content when cultivated on dipeptides. No effect on germination.</text>
</comment>
<comment type="similarity">
    <text evidence="6">Belongs to the major facilitator superfamily. Proton-dependent oligopeptide transporter (POT/PTR) (TC 2.A.17) family.</text>
</comment>
<dbReference type="EMBL" id="AL132957">
    <property type="protein sequence ID" value="CAB70988.1"/>
    <property type="molecule type" value="Genomic_DNA"/>
</dbReference>
<dbReference type="EMBL" id="CP002686">
    <property type="protein sequence ID" value="AEE79192.1"/>
    <property type="molecule type" value="Genomic_DNA"/>
</dbReference>
<dbReference type="EMBL" id="CP002686">
    <property type="protein sequence ID" value="ANM64757.1"/>
    <property type="molecule type" value="Genomic_DNA"/>
</dbReference>
<dbReference type="EMBL" id="AF360155">
    <property type="protein sequence ID" value="AAK25865.1"/>
    <property type="molecule type" value="mRNA"/>
</dbReference>
<dbReference type="EMBL" id="AY113884">
    <property type="protein sequence ID" value="AAM44932.1"/>
    <property type="molecule type" value="mRNA"/>
</dbReference>
<dbReference type="EMBL" id="AY084773">
    <property type="protein sequence ID" value="AAM61341.1"/>
    <property type="molecule type" value="mRNA"/>
</dbReference>
<dbReference type="PIR" id="T47573">
    <property type="entry name" value="T47573"/>
</dbReference>
<dbReference type="RefSeq" id="NP_001326764.1">
    <property type="nucleotide sequence ID" value="NM_001339651.1"/>
</dbReference>
<dbReference type="RefSeq" id="NP_190982.1">
    <property type="nucleotide sequence ID" value="NM_115274.3"/>
</dbReference>
<dbReference type="SMR" id="Q9M390"/>
<dbReference type="BioGRID" id="9898">
    <property type="interactions" value="30"/>
</dbReference>
<dbReference type="FunCoup" id="Q9M390">
    <property type="interactions" value="1870"/>
</dbReference>
<dbReference type="IntAct" id="Q9M390">
    <property type="interactions" value="28"/>
</dbReference>
<dbReference type="STRING" id="3702.Q9M390"/>
<dbReference type="TCDB" id="2.A.17.3.7">
    <property type="family name" value="the proton-dependent oligopeptide transporter (pot/ptr) family"/>
</dbReference>
<dbReference type="PaxDb" id="3702-AT3G54140.1"/>
<dbReference type="ProteomicsDB" id="226444"/>
<dbReference type="EnsemblPlants" id="AT3G54140.1">
    <property type="protein sequence ID" value="AT3G54140.1"/>
    <property type="gene ID" value="AT3G54140"/>
</dbReference>
<dbReference type="EnsemblPlants" id="AT3G54140.2">
    <property type="protein sequence ID" value="AT3G54140.2"/>
    <property type="gene ID" value="AT3G54140"/>
</dbReference>
<dbReference type="GeneID" id="824581"/>
<dbReference type="Gramene" id="AT3G54140.1">
    <property type="protein sequence ID" value="AT3G54140.1"/>
    <property type="gene ID" value="AT3G54140"/>
</dbReference>
<dbReference type="Gramene" id="AT3G54140.2">
    <property type="protein sequence ID" value="AT3G54140.2"/>
    <property type="gene ID" value="AT3G54140"/>
</dbReference>
<dbReference type="KEGG" id="ath:AT3G54140"/>
<dbReference type="Araport" id="AT3G54140"/>
<dbReference type="TAIR" id="AT3G54140">
    <property type="gene designation" value="NPF8.1"/>
</dbReference>
<dbReference type="eggNOG" id="KOG1237">
    <property type="taxonomic scope" value="Eukaryota"/>
</dbReference>
<dbReference type="HOGENOM" id="CLU_009313_4_1_1"/>
<dbReference type="InParanoid" id="Q9M390"/>
<dbReference type="OMA" id="QYFFIGC"/>
<dbReference type="OrthoDB" id="8904098at2759"/>
<dbReference type="PhylomeDB" id="Q9M390"/>
<dbReference type="BRENDA" id="7.4.2.5">
    <property type="organism ID" value="399"/>
</dbReference>
<dbReference type="PRO" id="PR:Q9M390"/>
<dbReference type="Proteomes" id="UP000006548">
    <property type="component" value="Chromosome 3"/>
</dbReference>
<dbReference type="ExpressionAtlas" id="Q9M390">
    <property type="expression patterns" value="baseline and differential"/>
</dbReference>
<dbReference type="GO" id="GO:0005886">
    <property type="term" value="C:plasma membrane"/>
    <property type="evidence" value="ECO:0000314"/>
    <property type="project" value="TAIR"/>
</dbReference>
<dbReference type="GO" id="GO:0009506">
    <property type="term" value="C:plasmodesma"/>
    <property type="evidence" value="ECO:0007005"/>
    <property type="project" value="TAIR"/>
</dbReference>
<dbReference type="GO" id="GO:0071916">
    <property type="term" value="F:dipeptide transmembrane transporter activity"/>
    <property type="evidence" value="ECO:0000314"/>
    <property type="project" value="TAIR"/>
</dbReference>
<dbReference type="GO" id="GO:0042937">
    <property type="term" value="F:tripeptide transmembrane transporter activity"/>
    <property type="evidence" value="ECO:0000314"/>
    <property type="project" value="TAIR"/>
</dbReference>
<dbReference type="GO" id="GO:0042938">
    <property type="term" value="P:dipeptide transport"/>
    <property type="evidence" value="ECO:0000314"/>
    <property type="project" value="TAIR"/>
</dbReference>
<dbReference type="GO" id="GO:0015031">
    <property type="term" value="P:protein transport"/>
    <property type="evidence" value="ECO:0007669"/>
    <property type="project" value="UniProtKB-KW"/>
</dbReference>
<dbReference type="GO" id="GO:0042939">
    <property type="term" value="P:tripeptide transport"/>
    <property type="evidence" value="ECO:0000314"/>
    <property type="project" value="TAIR"/>
</dbReference>
<dbReference type="CDD" id="cd17418">
    <property type="entry name" value="MFS_NPF8"/>
    <property type="match status" value="1"/>
</dbReference>
<dbReference type="Gene3D" id="1.20.1250.20">
    <property type="entry name" value="MFS general substrate transporter like domains"/>
    <property type="match status" value="1"/>
</dbReference>
<dbReference type="InterPro" id="IPR036259">
    <property type="entry name" value="MFS_trans_sf"/>
</dbReference>
<dbReference type="InterPro" id="IPR000109">
    <property type="entry name" value="POT_fam"/>
</dbReference>
<dbReference type="InterPro" id="IPR018456">
    <property type="entry name" value="PTR2_symporter_CS"/>
</dbReference>
<dbReference type="PANTHER" id="PTHR11654">
    <property type="entry name" value="OLIGOPEPTIDE TRANSPORTER-RELATED"/>
    <property type="match status" value="1"/>
</dbReference>
<dbReference type="Pfam" id="PF00854">
    <property type="entry name" value="PTR2"/>
    <property type="match status" value="1"/>
</dbReference>
<dbReference type="SUPFAM" id="SSF103473">
    <property type="entry name" value="MFS general substrate transporter"/>
    <property type="match status" value="1"/>
</dbReference>
<dbReference type="PROSITE" id="PS01022">
    <property type="entry name" value="PTR2_1"/>
    <property type="match status" value="1"/>
</dbReference>
<dbReference type="PROSITE" id="PS01023">
    <property type="entry name" value="PTR2_2"/>
    <property type="match status" value="1"/>
</dbReference>
<sequence length="570" mass="64034">MEEKDVYTQDGTVDIHKNPANKEKTGNWKACRFILGNECCERLAYYGMGTNLVNYLESRLNQGNATAANNVTNWSGTCYITPLIGAFIADAYLGRYWTIATFVFIYVSGMTLLTLSASVPGLKPGNCNADTCHPNSSQTAVFFVALYMIALGTGGIKPCVSSFGADQFDENDENEKIKKSSFFNWFYFSINVGALIAATVLVWIQMNVGWGWGFGVPTVAMVIAVCFFFFGSRFYRLQRPGGSPLTRIFQVIVAAFRKISVKVPEDKSLLFETADDESNIKGSRKLVHTDNLKFFDKAAVESQSDSIKDGEVNPWRLCSVTQVEELKSIITLLPVWATGIVFATVYSQMSTMFVLQGNTMDQHMGKNFEIPSASLSLFDTVSVLFWTPVYDQFIIPLARKFTRNERGFTQLQRMGIGLVVSIFAMITAGVLEVVRLDYVKTHNAYDQKQIHMSIFWQIPQYLLIGCAEVFTFIGQLEFFYDQAPDAMRSLCSALSLTTVALGNYLSTVLVTVVMKITKKNGKPGWIPDNLNRGHLDYFFYLLATLSFLNFLVYLWISKRYKYKKAVGRAH</sequence>
<name>PTR1_ARATH</name>
<protein>
    <recommendedName>
        <fullName>Protein NRT1/ PTR FAMILY 8.1</fullName>
        <shortName>AtNPF8.1</shortName>
    </recommendedName>
    <alternativeName>
        <fullName>Peptide transporter PTR1</fullName>
    </alternativeName>
</protein>
<accession>Q9M390</accession>
<gene>
    <name type="primary">NPF8.1</name>
    <name type="synonym">PTR1</name>
    <name type="ordered locus">At3g54140</name>
    <name type="ORF">F24B22.100</name>
</gene>
<proteinExistence type="evidence at protein level"/>
<feature type="chain" id="PRO_0000378322" description="Protein NRT1/ PTR FAMILY 8.1">
    <location>
        <begin position="1"/>
        <end position="570"/>
    </location>
</feature>
<feature type="transmembrane region" description="Helical" evidence="2">
    <location>
        <begin position="99"/>
        <end position="119"/>
    </location>
</feature>
<feature type="transmembrane region" description="Helical" evidence="2">
    <location>
        <begin position="140"/>
        <end position="160"/>
    </location>
</feature>
<feature type="transmembrane region" description="Helical" evidence="2">
    <location>
        <begin position="182"/>
        <end position="202"/>
    </location>
</feature>
<feature type="transmembrane region" description="Helical" evidence="2">
    <location>
        <begin position="210"/>
        <end position="230"/>
    </location>
</feature>
<feature type="transmembrane region" description="Helical" evidence="2">
    <location>
        <begin position="329"/>
        <end position="349"/>
    </location>
</feature>
<feature type="transmembrane region" description="Helical" evidence="2">
    <location>
        <begin position="377"/>
        <end position="397"/>
    </location>
</feature>
<feature type="transmembrane region" description="Helical" evidence="2">
    <location>
        <begin position="414"/>
        <end position="434"/>
    </location>
</feature>
<feature type="transmembrane region" description="Helical" evidence="2">
    <location>
        <begin position="454"/>
        <end position="474"/>
    </location>
</feature>
<feature type="transmembrane region" description="Helical" evidence="2">
    <location>
        <begin position="494"/>
        <end position="514"/>
    </location>
</feature>
<feature type="transmembrane region" description="Helical" evidence="2">
    <location>
        <begin position="537"/>
        <end position="557"/>
    </location>
</feature>
<feature type="modified residue" description="Phosphothreonine" evidence="1">
    <location>
        <position position="98"/>
    </location>
</feature>
<evidence type="ECO:0000250" key="1">
    <source>
        <dbReference type="UniProtKB" id="Q05085"/>
    </source>
</evidence>
<evidence type="ECO:0000255" key="2"/>
<evidence type="ECO:0000269" key="3">
    <source>
    </source>
</evidence>
<evidence type="ECO:0000269" key="4">
    <source>
    </source>
</evidence>
<evidence type="ECO:0000269" key="5">
    <source>
    </source>
</evidence>
<evidence type="ECO:0000305" key="6"/>
<reference key="1">
    <citation type="journal article" date="2000" name="Nature">
        <title>Sequence and analysis of chromosome 3 of the plant Arabidopsis thaliana.</title>
        <authorList>
            <person name="Salanoubat M."/>
            <person name="Lemcke K."/>
            <person name="Rieger M."/>
            <person name="Ansorge W."/>
            <person name="Unseld M."/>
            <person name="Fartmann B."/>
            <person name="Valle G."/>
            <person name="Bloecker H."/>
            <person name="Perez-Alonso M."/>
            <person name="Obermaier B."/>
            <person name="Delseny M."/>
            <person name="Boutry M."/>
            <person name="Grivell L.A."/>
            <person name="Mache R."/>
            <person name="Puigdomenech P."/>
            <person name="De Simone V."/>
            <person name="Choisne N."/>
            <person name="Artiguenave F."/>
            <person name="Robert C."/>
            <person name="Brottier P."/>
            <person name="Wincker P."/>
            <person name="Cattolico L."/>
            <person name="Weissenbach J."/>
            <person name="Saurin W."/>
            <person name="Quetier F."/>
            <person name="Schaefer M."/>
            <person name="Mueller-Auer S."/>
            <person name="Gabel C."/>
            <person name="Fuchs M."/>
            <person name="Benes V."/>
            <person name="Wurmbach E."/>
            <person name="Drzonek H."/>
            <person name="Erfle H."/>
            <person name="Jordan N."/>
            <person name="Bangert S."/>
            <person name="Wiedelmann R."/>
            <person name="Kranz H."/>
            <person name="Voss H."/>
            <person name="Holland R."/>
            <person name="Brandt P."/>
            <person name="Nyakatura G."/>
            <person name="Vezzi A."/>
            <person name="D'Angelo M."/>
            <person name="Pallavicini A."/>
            <person name="Toppo S."/>
            <person name="Simionati B."/>
            <person name="Conrad A."/>
            <person name="Hornischer K."/>
            <person name="Kauer G."/>
            <person name="Loehnert T.-H."/>
            <person name="Nordsiek G."/>
            <person name="Reichelt J."/>
            <person name="Scharfe M."/>
            <person name="Schoen O."/>
            <person name="Bargues M."/>
            <person name="Terol J."/>
            <person name="Climent J."/>
            <person name="Navarro P."/>
            <person name="Collado C."/>
            <person name="Perez-Perez A."/>
            <person name="Ottenwaelder B."/>
            <person name="Duchemin D."/>
            <person name="Cooke R."/>
            <person name="Laudie M."/>
            <person name="Berger-Llauro C."/>
            <person name="Purnelle B."/>
            <person name="Masuy D."/>
            <person name="de Haan M."/>
            <person name="Maarse A.C."/>
            <person name="Alcaraz J.-P."/>
            <person name="Cottet A."/>
            <person name="Casacuberta E."/>
            <person name="Monfort A."/>
            <person name="Argiriou A."/>
            <person name="Flores M."/>
            <person name="Liguori R."/>
            <person name="Vitale D."/>
            <person name="Mannhaupt G."/>
            <person name="Haase D."/>
            <person name="Schoof H."/>
            <person name="Rudd S."/>
            <person name="Zaccaria P."/>
            <person name="Mewes H.-W."/>
            <person name="Mayer K.F.X."/>
            <person name="Kaul S."/>
            <person name="Town C.D."/>
            <person name="Koo H.L."/>
            <person name="Tallon L.J."/>
            <person name="Jenkins J."/>
            <person name="Rooney T."/>
            <person name="Rizzo M."/>
            <person name="Walts A."/>
            <person name="Utterback T."/>
            <person name="Fujii C.Y."/>
            <person name="Shea T.P."/>
            <person name="Creasy T.H."/>
            <person name="Haas B."/>
            <person name="Maiti R."/>
            <person name="Wu D."/>
            <person name="Peterson J."/>
            <person name="Van Aken S."/>
            <person name="Pai G."/>
            <person name="Militscher J."/>
            <person name="Sellers P."/>
            <person name="Gill J.E."/>
            <person name="Feldblyum T.V."/>
            <person name="Preuss D."/>
            <person name="Lin X."/>
            <person name="Nierman W.C."/>
            <person name="Salzberg S.L."/>
            <person name="White O."/>
            <person name="Venter J.C."/>
            <person name="Fraser C.M."/>
            <person name="Kaneko T."/>
            <person name="Nakamura Y."/>
            <person name="Sato S."/>
            <person name="Kato T."/>
            <person name="Asamizu E."/>
            <person name="Sasamoto S."/>
            <person name="Kimura T."/>
            <person name="Idesawa K."/>
            <person name="Kawashima K."/>
            <person name="Kishida Y."/>
            <person name="Kiyokawa C."/>
            <person name="Kohara M."/>
            <person name="Matsumoto M."/>
            <person name="Matsuno A."/>
            <person name="Muraki A."/>
            <person name="Nakayama S."/>
            <person name="Nakazaki N."/>
            <person name="Shinpo S."/>
            <person name="Takeuchi C."/>
            <person name="Wada T."/>
            <person name="Watanabe A."/>
            <person name="Yamada M."/>
            <person name="Yasuda M."/>
            <person name="Tabata S."/>
        </authorList>
    </citation>
    <scope>NUCLEOTIDE SEQUENCE [LARGE SCALE GENOMIC DNA]</scope>
    <source>
        <strain>cv. Columbia</strain>
    </source>
</reference>
<reference key="2">
    <citation type="journal article" date="2017" name="Plant J.">
        <title>Araport11: a complete reannotation of the Arabidopsis thaliana reference genome.</title>
        <authorList>
            <person name="Cheng C.Y."/>
            <person name="Krishnakumar V."/>
            <person name="Chan A.P."/>
            <person name="Thibaud-Nissen F."/>
            <person name="Schobel S."/>
            <person name="Town C.D."/>
        </authorList>
    </citation>
    <scope>GENOME REANNOTATION</scope>
    <source>
        <strain>cv. Columbia</strain>
    </source>
</reference>
<reference key="3">
    <citation type="journal article" date="2003" name="Science">
        <title>Empirical analysis of transcriptional activity in the Arabidopsis genome.</title>
        <authorList>
            <person name="Yamada K."/>
            <person name="Lim J."/>
            <person name="Dale J.M."/>
            <person name="Chen H."/>
            <person name="Shinn P."/>
            <person name="Palm C.J."/>
            <person name="Southwick A.M."/>
            <person name="Wu H.C."/>
            <person name="Kim C.J."/>
            <person name="Nguyen M."/>
            <person name="Pham P.K."/>
            <person name="Cheuk R.F."/>
            <person name="Karlin-Newmann G."/>
            <person name="Liu S.X."/>
            <person name="Lam B."/>
            <person name="Sakano H."/>
            <person name="Wu T."/>
            <person name="Yu G."/>
            <person name="Miranda M."/>
            <person name="Quach H.L."/>
            <person name="Tripp M."/>
            <person name="Chang C.H."/>
            <person name="Lee J.M."/>
            <person name="Toriumi M.J."/>
            <person name="Chan M.M."/>
            <person name="Tang C.C."/>
            <person name="Onodera C.S."/>
            <person name="Deng J.M."/>
            <person name="Akiyama K."/>
            <person name="Ansari Y."/>
            <person name="Arakawa T."/>
            <person name="Banh J."/>
            <person name="Banno F."/>
            <person name="Bowser L."/>
            <person name="Brooks S.Y."/>
            <person name="Carninci P."/>
            <person name="Chao Q."/>
            <person name="Choy N."/>
            <person name="Enju A."/>
            <person name="Goldsmith A.D."/>
            <person name="Gurjal M."/>
            <person name="Hansen N.F."/>
            <person name="Hayashizaki Y."/>
            <person name="Johnson-Hopson C."/>
            <person name="Hsuan V.W."/>
            <person name="Iida K."/>
            <person name="Karnes M."/>
            <person name="Khan S."/>
            <person name="Koesema E."/>
            <person name="Ishida J."/>
            <person name="Jiang P.X."/>
            <person name="Jones T."/>
            <person name="Kawai J."/>
            <person name="Kamiya A."/>
            <person name="Meyers C."/>
            <person name="Nakajima M."/>
            <person name="Narusaka M."/>
            <person name="Seki M."/>
            <person name="Sakurai T."/>
            <person name="Satou M."/>
            <person name="Tamse R."/>
            <person name="Vaysberg M."/>
            <person name="Wallender E.K."/>
            <person name="Wong C."/>
            <person name="Yamamura Y."/>
            <person name="Yuan S."/>
            <person name="Shinozaki K."/>
            <person name="Davis R.W."/>
            <person name="Theologis A."/>
            <person name="Ecker J.R."/>
        </authorList>
    </citation>
    <scope>NUCLEOTIDE SEQUENCE [LARGE SCALE MRNA]</scope>
    <source>
        <strain>cv. Columbia</strain>
    </source>
</reference>
<reference key="4">
    <citation type="submission" date="2002-03" db="EMBL/GenBank/DDBJ databases">
        <title>Full-length cDNA from Arabidopsis thaliana.</title>
        <authorList>
            <person name="Brover V.V."/>
            <person name="Troukhan M.E."/>
            <person name="Alexandrov N.A."/>
            <person name="Lu Y.-P."/>
            <person name="Flavell R.B."/>
            <person name="Feldmann K.A."/>
        </authorList>
    </citation>
    <scope>NUCLEOTIDE SEQUENCE [LARGE SCALE MRNA]</scope>
</reference>
<reference key="5">
    <citation type="journal article" date="2003" name="Mol. Cell. Proteomics">
        <title>Large-scale analysis of in vivo phosphorylated membrane proteins by immobilized metal ion affinity chromatography and mass spectrometry.</title>
        <authorList>
            <person name="Nuehse T.S."/>
            <person name="Stensballe A."/>
            <person name="Jensen O.N."/>
            <person name="Peck S.C."/>
        </authorList>
    </citation>
    <scope>IDENTIFICATION BY MASS SPECTROMETRY [LARGE SCALE ANALYSIS]</scope>
    <source>
        <strain>cv. La-0</strain>
    </source>
</reference>
<reference key="6">
    <citation type="journal article" date="2004" name="Plant J.">
        <title>AtPTR1, a plasma membrane peptide transporter expressed during seed germination and in vascular tissue of Arabidopsis.</title>
        <authorList>
            <person name="Dietrich D."/>
            <person name="Hammes U."/>
            <person name="Thor K."/>
            <person name="Suter-Grotemeyer M."/>
            <person name="Flueckiger R."/>
            <person name="Slusarenko A.J."/>
            <person name="Ward J.M."/>
            <person name="Rentsch D."/>
        </authorList>
    </citation>
    <scope>FUNCTION</scope>
    <scope>TISSUE SPECIFICITY</scope>
    <scope>SUBCELLULAR LOCATION</scope>
</reference>
<reference key="7">
    <citation type="journal article" date="2007" name="FEBS Lett.">
        <title>Nitrate transporters and peptide transporters.</title>
        <authorList>
            <person name="Tsay Y.F."/>
            <person name="Chiu C.C."/>
            <person name="Tsai C.B."/>
            <person name="Ho C.H."/>
            <person name="Hsu P.K."/>
        </authorList>
    </citation>
    <scope>TISSUE SPECIFICITY</scope>
    <scope>GENE FAMILY</scope>
</reference>
<reference key="8">
    <citation type="journal article" date="2008" name="Plant Physiol.">
        <title>AtPTR1 and AtPTR5 transport dipeptides in planta.</title>
        <authorList>
            <person name="Komarova N.Y."/>
            <person name="Thor K."/>
            <person name="Gubler A."/>
            <person name="Meier S."/>
            <person name="Dietrich D."/>
            <person name="Weichert A."/>
            <person name="Suter Grotemeyer M."/>
            <person name="Tegeder M."/>
            <person name="Rentsch D."/>
        </authorList>
    </citation>
    <scope>FUNCTION</scope>
    <scope>DISRUPTION PHENOTYPE</scope>
</reference>
<reference key="9">
    <citation type="journal article" date="2014" name="Trends Plant Sci.">
        <title>A unified nomenclature of NITRATE TRANSPORTER 1/PEPTIDE TRANSPORTER family members in plants.</title>
        <authorList>
            <person name="Leran S."/>
            <person name="Varala K."/>
            <person name="Boyer J.C."/>
            <person name="Chiurazzi M."/>
            <person name="Crawford N."/>
            <person name="Daniel-Vedele F."/>
            <person name="David L."/>
            <person name="Dickstein R."/>
            <person name="Fernandez E."/>
            <person name="Forde B."/>
            <person name="Gassmann W."/>
            <person name="Geiger D."/>
            <person name="Gojon A."/>
            <person name="Gong J.M."/>
            <person name="Halkier B.A."/>
            <person name="Harris J.M."/>
            <person name="Hedrich R."/>
            <person name="Limami A.M."/>
            <person name="Rentsch D."/>
            <person name="Seo M."/>
            <person name="Tsay Y.F."/>
            <person name="Zhang M."/>
            <person name="Coruzzi G."/>
            <person name="Lacombe B."/>
        </authorList>
    </citation>
    <scope>GENE FAMILY</scope>
    <scope>NOMENCLATURE</scope>
</reference>
<organism>
    <name type="scientific">Arabidopsis thaliana</name>
    <name type="common">Mouse-ear cress</name>
    <dbReference type="NCBI Taxonomy" id="3702"/>
    <lineage>
        <taxon>Eukaryota</taxon>
        <taxon>Viridiplantae</taxon>
        <taxon>Streptophyta</taxon>
        <taxon>Embryophyta</taxon>
        <taxon>Tracheophyta</taxon>
        <taxon>Spermatophyta</taxon>
        <taxon>Magnoliopsida</taxon>
        <taxon>eudicotyledons</taxon>
        <taxon>Gunneridae</taxon>
        <taxon>Pentapetalae</taxon>
        <taxon>rosids</taxon>
        <taxon>malvids</taxon>
        <taxon>Brassicales</taxon>
        <taxon>Brassicaceae</taxon>
        <taxon>Camelineae</taxon>
        <taxon>Arabidopsis</taxon>
    </lineage>
</organism>
<keyword id="KW-1003">Cell membrane</keyword>
<keyword id="KW-0472">Membrane</keyword>
<keyword id="KW-0571">Peptide transport</keyword>
<keyword id="KW-0597">Phosphoprotein</keyword>
<keyword id="KW-0653">Protein transport</keyword>
<keyword id="KW-1185">Reference proteome</keyword>
<keyword id="KW-0812">Transmembrane</keyword>
<keyword id="KW-1133">Transmembrane helix</keyword>
<keyword id="KW-0813">Transport</keyword>